<organism>
    <name type="scientific">Methanocaldococcus jannaschii (strain ATCC 43067 / DSM 2661 / JAL-1 / JCM 10045 / NBRC 100440)</name>
    <name type="common">Methanococcus jannaschii</name>
    <dbReference type="NCBI Taxonomy" id="243232"/>
    <lineage>
        <taxon>Archaea</taxon>
        <taxon>Methanobacteriati</taxon>
        <taxon>Methanobacteriota</taxon>
        <taxon>Methanomada group</taxon>
        <taxon>Methanococci</taxon>
        <taxon>Methanococcales</taxon>
        <taxon>Methanocaldococcaceae</taxon>
        <taxon>Methanocaldococcus</taxon>
    </lineage>
</organism>
<dbReference type="EMBL" id="L77117">
    <property type="protein sequence ID" value="AAB99072.1"/>
    <property type="molecule type" value="Genomic_DNA"/>
</dbReference>
<dbReference type="PIR" id="C64432">
    <property type="entry name" value="C64432"/>
</dbReference>
<dbReference type="RefSeq" id="WP_010870573.1">
    <property type="nucleotide sequence ID" value="NC_000909.1"/>
</dbReference>
<dbReference type="STRING" id="243232.MJ_1060"/>
<dbReference type="PaxDb" id="243232-MJ_1060"/>
<dbReference type="EnsemblBacteria" id="AAB99072">
    <property type="protein sequence ID" value="AAB99072"/>
    <property type="gene ID" value="MJ_1060"/>
</dbReference>
<dbReference type="GeneID" id="1451957"/>
<dbReference type="KEGG" id="mja:MJ_1060"/>
<dbReference type="eggNOG" id="arCOG06580">
    <property type="taxonomic scope" value="Archaea"/>
</dbReference>
<dbReference type="HOGENOM" id="CLU_506818_0_0_2"/>
<dbReference type="InParanoid" id="Q58460"/>
<dbReference type="OrthoDB" id="66105at2157"/>
<dbReference type="Proteomes" id="UP000000805">
    <property type="component" value="Chromosome"/>
</dbReference>
<accession>Q58460</accession>
<reference key="1">
    <citation type="journal article" date="1996" name="Science">
        <title>Complete genome sequence of the methanogenic archaeon, Methanococcus jannaschii.</title>
        <authorList>
            <person name="Bult C.J."/>
            <person name="White O."/>
            <person name="Olsen G.J."/>
            <person name="Zhou L."/>
            <person name="Fleischmann R.D."/>
            <person name="Sutton G.G."/>
            <person name="Blake J.A."/>
            <person name="FitzGerald L.M."/>
            <person name="Clayton R.A."/>
            <person name="Gocayne J.D."/>
            <person name="Kerlavage A.R."/>
            <person name="Dougherty B.A."/>
            <person name="Tomb J.-F."/>
            <person name="Adams M.D."/>
            <person name="Reich C.I."/>
            <person name="Overbeek R."/>
            <person name="Kirkness E.F."/>
            <person name="Weinstock K.G."/>
            <person name="Merrick J.M."/>
            <person name="Glodek A."/>
            <person name="Scott J.L."/>
            <person name="Geoghagen N.S.M."/>
            <person name="Weidman J.F."/>
            <person name="Fuhrmann J.L."/>
            <person name="Nguyen D."/>
            <person name="Utterback T.R."/>
            <person name="Kelley J.M."/>
            <person name="Peterson J.D."/>
            <person name="Sadow P.W."/>
            <person name="Hanna M.C."/>
            <person name="Cotton M.D."/>
            <person name="Roberts K.M."/>
            <person name="Hurst M.A."/>
            <person name="Kaine B.P."/>
            <person name="Borodovsky M."/>
            <person name="Klenk H.-P."/>
            <person name="Fraser C.M."/>
            <person name="Smith H.O."/>
            <person name="Woese C.R."/>
            <person name="Venter J.C."/>
        </authorList>
    </citation>
    <scope>NUCLEOTIDE SEQUENCE [LARGE SCALE GENOMIC DNA]</scope>
    <source>
        <strain>ATCC 43067 / DSM 2661 / JAL-1 / JCM 10045 / NBRC 100440</strain>
    </source>
</reference>
<feature type="chain" id="PRO_0000107154" description="Uncharacterized protein MJ1060">
    <location>
        <begin position="1"/>
        <end position="537"/>
    </location>
</feature>
<sequence length="537" mass="65990">MIVEIYNFNFIRINEKEIKLFYNTYPPLKKLECYLDFIKELVSNSYKNNKFIKKDEFEHLVYNTFLYFLINWDNLYHTNQMPFYIWYNFKERVDDILKSEKDITFILNQKYVNIDYFGKYLKKFTNNIKSKNKNRIVDYIMENFQGNLIMLYFLVRKIIMNKNNNYRFDILFITDYDRYYGNNRFFGNHLFKNEEFKKLLKNFDINLTDKNYSILFTKYNFINLPKYIKDYYKKRQDYLFIEDILNLKLGFDILLNSSKIFKKVNLTNYNDEHEKFIHTMFNIFLKHKLPFVLWFYLSIKDYISKTNIKCIVGDSERNFMFYLCNIYRLWRKNIKTIAFSHEVINNNYIHLPISEKYSCIPDCKLVWNENIKKLLIDKYNFPKDKVIVFPDPRFLYWKKYPKKEKTILFVSQGYPEFYEEIFNTFRDKKLINTLIEHGYSFYFKPHPGEYLNDFSIRELEKLKNIKEIKIINGLNFVPEYTIGMSSTMIYELLNAGSKSFFLESNAKETFMMDDKEFKKYFRKNLKEIFFEILNKQL</sequence>
<protein>
    <recommendedName>
        <fullName>Uncharacterized protein MJ1060</fullName>
    </recommendedName>
</protein>
<proteinExistence type="predicted"/>
<gene>
    <name type="ordered locus">MJ1060</name>
</gene>
<name>Y1060_METJA</name>
<keyword id="KW-1185">Reference proteome</keyword>